<name>SBT17_ARATH</name>
<accession>O65351</accession>
<accession>P80854</accession>
<accession>Q39007</accession>
<accession>Q8RWQ7</accession>
<protein>
    <recommendedName>
        <fullName evidence="12">Subtilisin-like protease SBT1.7</fullName>
        <ecNumber evidence="13">3.4.21.-</ecNumber>
    </recommendedName>
    <alternativeName>
        <fullName>Cucumisin-like serine protease</fullName>
    </alternativeName>
    <alternativeName>
        <fullName evidence="12">Subtilase subfamily 1 member 7</fullName>
        <shortName evidence="12">AtSBT1.7</shortName>
    </alternativeName>
    <alternativeName>
        <fullName evidence="11">Subtilisin-like serine protease 1</fullName>
        <shortName evidence="11">At-SLP1</shortName>
    </alternativeName>
</protein>
<feature type="signal peptide" evidence="1">
    <location>
        <begin position="1"/>
        <end position="24"/>
    </location>
</feature>
<feature type="propeptide" id="PRO_0000042846" evidence="1 5 9">
    <location>
        <begin position="25"/>
        <end position="106"/>
    </location>
</feature>
<feature type="chain" id="PRO_0000042847" description="Subtilisin-like protease SBT1.7" evidence="5">
    <location>
        <begin position="107"/>
        <end position="757"/>
    </location>
</feature>
<feature type="domain" description="Inhibitor I9" evidence="1">
    <location>
        <begin position="31"/>
        <end position="106"/>
    </location>
</feature>
<feature type="domain" description="Peptidase S8" evidence="2">
    <location>
        <begin position="102"/>
        <end position="610"/>
    </location>
</feature>
<feature type="region of interest" description="Disordered" evidence="3">
    <location>
        <begin position="196"/>
        <end position="219"/>
    </location>
</feature>
<feature type="compositionally biased region" description="Basic and acidic residues" evidence="3">
    <location>
        <begin position="198"/>
        <end position="213"/>
    </location>
</feature>
<feature type="active site" description="Charge relay system" evidence="2">
    <location>
        <position position="139"/>
    </location>
</feature>
<feature type="active site" description="Charge relay system" evidence="2">
    <location>
        <position position="212"/>
    </location>
</feature>
<feature type="active site" description="Charge relay system" evidence="2">
    <location>
        <position position="542"/>
    </location>
</feature>
<feature type="glycosylation site" description="N-linked (GlcNAc...) asparagine" evidence="1">
    <location>
        <position position="170"/>
    </location>
</feature>
<feature type="glycosylation site" description="N-linked (GlcNAc...) asparagine" evidence="1">
    <location>
        <position position="352"/>
    </location>
</feature>
<feature type="glycosylation site" description="N-linked (GlcNAc...) asparagine" evidence="1">
    <location>
        <position position="376"/>
    </location>
</feature>
<feature type="glycosylation site" description="N-linked (GlcNAc...) asparagine" evidence="1">
    <location>
        <position position="379"/>
    </location>
</feature>
<feature type="glycosylation site" description="N-linked (GlcNAc...) asparagine" evidence="1">
    <location>
        <position position="631"/>
    </location>
</feature>
<feature type="glycosylation site" description="N-linked (GlcNAc...) asparagine" evidence="1">
    <location>
        <position position="644"/>
    </location>
</feature>
<feature type="sequence conflict" description="In Ref. 5; CAA59963." evidence="13" ref="5">
    <original>M</original>
    <variation>T</variation>
    <location>
        <position position="41"/>
    </location>
</feature>
<feature type="sequence conflict" description="In Ref. 5; CAA59963." evidence="13" ref="5">
    <original>APRARV</original>
    <variation>LHAL</variation>
    <location>
        <begin position="242"/>
        <end position="247"/>
    </location>
</feature>
<feature type="sequence conflict" description="In Ref. 4; AAM10321/AAN46863." evidence="13" ref="4">
    <original>W</original>
    <variation>C</variation>
    <location>
        <position position="562"/>
    </location>
</feature>
<feature type="sequence conflict" description="In Ref. 5; CAA59963." evidence="13" ref="5">
    <original>V</original>
    <variation>A</variation>
    <location>
        <position position="670"/>
    </location>
</feature>
<keyword id="KW-0106">Calcium</keyword>
<keyword id="KW-0134">Cell wall</keyword>
<keyword id="KW-0903">Direct protein sequencing</keyword>
<keyword id="KW-0325">Glycoprotein</keyword>
<keyword id="KW-0378">Hydrolase</keyword>
<keyword id="KW-0645">Protease</keyword>
<keyword id="KW-1185">Reference proteome</keyword>
<keyword id="KW-0964">Secreted</keyword>
<keyword id="KW-0720">Serine protease</keyword>
<keyword id="KW-0732">Signal</keyword>
<keyword id="KW-0865">Zymogen</keyword>
<dbReference type="EC" id="3.4.21.-" evidence="13"/>
<dbReference type="EMBL" id="AF065639">
    <property type="protein sequence ID" value="AAC18851.1"/>
    <property type="molecule type" value="Genomic_DNA"/>
</dbReference>
<dbReference type="EMBL" id="AB007645">
    <property type="protein sequence ID" value="BAB09021.1"/>
    <property type="molecule type" value="Genomic_DNA"/>
</dbReference>
<dbReference type="EMBL" id="CP002688">
    <property type="protein sequence ID" value="AED98332.1"/>
    <property type="molecule type" value="Genomic_DNA"/>
</dbReference>
<dbReference type="EMBL" id="AF360285">
    <property type="protein sequence ID" value="AAK25995.1"/>
    <property type="molecule type" value="mRNA"/>
</dbReference>
<dbReference type="EMBL" id="AY091773">
    <property type="protein sequence ID" value="AAM10321.1"/>
    <property type="molecule type" value="mRNA"/>
</dbReference>
<dbReference type="EMBL" id="AY142612">
    <property type="protein sequence ID" value="AAN13181.1"/>
    <property type="molecule type" value="mRNA"/>
</dbReference>
<dbReference type="EMBL" id="BT001082">
    <property type="protein sequence ID" value="AAN46863.1"/>
    <property type="molecule type" value="mRNA"/>
</dbReference>
<dbReference type="EMBL" id="X85974">
    <property type="protein sequence ID" value="CAA59963.1"/>
    <property type="molecule type" value="mRNA"/>
</dbReference>
<dbReference type="PIR" id="JC7519">
    <property type="entry name" value="JC7519"/>
</dbReference>
<dbReference type="PIR" id="S52770">
    <property type="entry name" value="S52770"/>
</dbReference>
<dbReference type="RefSeq" id="NP_569048.1">
    <property type="nucleotide sequence ID" value="NM_126136.3"/>
</dbReference>
<dbReference type="SMR" id="O65351"/>
<dbReference type="BioGRID" id="22113">
    <property type="interactions" value="2"/>
</dbReference>
<dbReference type="FunCoup" id="O65351">
    <property type="interactions" value="575"/>
</dbReference>
<dbReference type="STRING" id="3702.O65351"/>
<dbReference type="MEROPS" id="S08.112"/>
<dbReference type="GlyCosmos" id="O65351">
    <property type="glycosylation" value="6 sites, No reported glycans"/>
</dbReference>
<dbReference type="GlyGen" id="O65351">
    <property type="glycosylation" value="6 sites"/>
</dbReference>
<dbReference type="PaxDb" id="3702-AT5G67360.1"/>
<dbReference type="ProteomicsDB" id="232882"/>
<dbReference type="EnsemblPlants" id="AT5G67360.1">
    <property type="protein sequence ID" value="AT5G67360.1"/>
    <property type="gene ID" value="AT5G67360"/>
</dbReference>
<dbReference type="GeneID" id="836871"/>
<dbReference type="Gramene" id="AT5G67360.1">
    <property type="protein sequence ID" value="AT5G67360.1"/>
    <property type="gene ID" value="AT5G67360"/>
</dbReference>
<dbReference type="KEGG" id="ath:AT5G67360"/>
<dbReference type="Araport" id="AT5G67360"/>
<dbReference type="TAIR" id="AT5G67360">
    <property type="gene designation" value="ARA12"/>
</dbReference>
<dbReference type="eggNOG" id="ENOG502QUSV">
    <property type="taxonomic scope" value="Eukaryota"/>
</dbReference>
<dbReference type="HOGENOM" id="CLU_000625_4_6_1"/>
<dbReference type="InParanoid" id="O65351"/>
<dbReference type="OMA" id="HHTHWYD"/>
<dbReference type="PhylomeDB" id="O65351"/>
<dbReference type="PRO" id="PR:O65351"/>
<dbReference type="Proteomes" id="UP000006548">
    <property type="component" value="Chromosome 5"/>
</dbReference>
<dbReference type="ExpressionAtlas" id="O65351">
    <property type="expression patterns" value="baseline and differential"/>
</dbReference>
<dbReference type="GO" id="GO:0048046">
    <property type="term" value="C:apoplast"/>
    <property type="evidence" value="ECO:0007005"/>
    <property type="project" value="TAIR"/>
</dbReference>
<dbReference type="GO" id="GO:0005576">
    <property type="term" value="C:extracellular region"/>
    <property type="evidence" value="ECO:0000314"/>
    <property type="project" value="TAIR"/>
</dbReference>
<dbReference type="GO" id="GO:0099503">
    <property type="term" value="C:secretory vesicle"/>
    <property type="evidence" value="ECO:0007005"/>
    <property type="project" value="TAIR"/>
</dbReference>
<dbReference type="GO" id="GO:0004252">
    <property type="term" value="F:serine-type endopeptidase activity"/>
    <property type="evidence" value="ECO:0000314"/>
    <property type="project" value="TAIR"/>
</dbReference>
<dbReference type="GO" id="GO:0080001">
    <property type="term" value="P:mucilage extrusion from seed coat"/>
    <property type="evidence" value="ECO:0000315"/>
    <property type="project" value="TAIR"/>
</dbReference>
<dbReference type="GO" id="GO:0048359">
    <property type="term" value="P:mucilage metabolic process involved in seed coat development"/>
    <property type="evidence" value="ECO:0000315"/>
    <property type="project" value="TAIR"/>
</dbReference>
<dbReference type="GO" id="GO:0006508">
    <property type="term" value="P:proteolysis"/>
    <property type="evidence" value="ECO:0007669"/>
    <property type="project" value="UniProtKB-KW"/>
</dbReference>
<dbReference type="GO" id="GO:0010214">
    <property type="term" value="P:seed coat development"/>
    <property type="evidence" value="ECO:0000315"/>
    <property type="project" value="TAIR"/>
</dbReference>
<dbReference type="CDD" id="cd02120">
    <property type="entry name" value="PA_subtilisin_like"/>
    <property type="match status" value="1"/>
</dbReference>
<dbReference type="CDD" id="cd04852">
    <property type="entry name" value="Peptidases_S8_3"/>
    <property type="match status" value="1"/>
</dbReference>
<dbReference type="FunFam" id="2.60.40.2310:FF:000001">
    <property type="entry name" value="Subtilisin-like protease SBT1.5"/>
    <property type="match status" value="1"/>
</dbReference>
<dbReference type="FunFam" id="3.40.50.200:FF:000006">
    <property type="entry name" value="Subtilisin-like protease SBT1.5"/>
    <property type="match status" value="1"/>
</dbReference>
<dbReference type="FunFam" id="3.50.30.30:FF:000005">
    <property type="entry name" value="subtilisin-like protease SBT1.5"/>
    <property type="match status" value="1"/>
</dbReference>
<dbReference type="FunFam" id="3.30.70.80:FF:000003">
    <property type="entry name" value="Subtilisin-like protease SBT1.9"/>
    <property type="match status" value="1"/>
</dbReference>
<dbReference type="Gene3D" id="2.60.40.2310">
    <property type="match status" value="1"/>
</dbReference>
<dbReference type="Gene3D" id="3.50.30.30">
    <property type="match status" value="1"/>
</dbReference>
<dbReference type="Gene3D" id="3.30.70.80">
    <property type="entry name" value="Peptidase S8 propeptide/proteinase inhibitor I9"/>
    <property type="match status" value="1"/>
</dbReference>
<dbReference type="Gene3D" id="3.40.50.200">
    <property type="entry name" value="Peptidase S8/S53 domain"/>
    <property type="match status" value="1"/>
</dbReference>
<dbReference type="InterPro" id="IPR003137">
    <property type="entry name" value="PA_domain"/>
</dbReference>
<dbReference type="InterPro" id="IPR000209">
    <property type="entry name" value="Peptidase_S8/S53_dom"/>
</dbReference>
<dbReference type="InterPro" id="IPR036852">
    <property type="entry name" value="Peptidase_S8/S53_dom_sf"/>
</dbReference>
<dbReference type="InterPro" id="IPR023828">
    <property type="entry name" value="Peptidase_S8_Ser-AS"/>
</dbReference>
<dbReference type="InterPro" id="IPR015500">
    <property type="entry name" value="Peptidase_S8_subtilisin-rel"/>
</dbReference>
<dbReference type="InterPro" id="IPR034197">
    <property type="entry name" value="Peptidases_S8_3"/>
</dbReference>
<dbReference type="InterPro" id="IPR010259">
    <property type="entry name" value="S8pro/Inhibitor_I9"/>
</dbReference>
<dbReference type="InterPro" id="IPR037045">
    <property type="entry name" value="S8pro/Inhibitor_I9_sf"/>
</dbReference>
<dbReference type="InterPro" id="IPR045051">
    <property type="entry name" value="SBT"/>
</dbReference>
<dbReference type="InterPro" id="IPR041469">
    <property type="entry name" value="Subtilisin-like_FN3"/>
</dbReference>
<dbReference type="PANTHER" id="PTHR10795">
    <property type="entry name" value="PROPROTEIN CONVERTASE SUBTILISIN/KEXIN"/>
    <property type="match status" value="1"/>
</dbReference>
<dbReference type="Pfam" id="PF17766">
    <property type="entry name" value="fn3_6"/>
    <property type="match status" value="1"/>
</dbReference>
<dbReference type="Pfam" id="PF05922">
    <property type="entry name" value="Inhibitor_I9"/>
    <property type="match status" value="1"/>
</dbReference>
<dbReference type="Pfam" id="PF02225">
    <property type="entry name" value="PA"/>
    <property type="match status" value="1"/>
</dbReference>
<dbReference type="Pfam" id="PF00082">
    <property type="entry name" value="Peptidase_S8"/>
    <property type="match status" value="1"/>
</dbReference>
<dbReference type="PRINTS" id="PR00723">
    <property type="entry name" value="SUBTILISIN"/>
</dbReference>
<dbReference type="SUPFAM" id="SSF52743">
    <property type="entry name" value="Subtilisin-like"/>
    <property type="match status" value="1"/>
</dbReference>
<dbReference type="PROSITE" id="PS51892">
    <property type="entry name" value="SUBTILASE"/>
    <property type="match status" value="1"/>
</dbReference>
<dbReference type="PROSITE" id="PS00138">
    <property type="entry name" value="SUBTILASE_SER"/>
    <property type="match status" value="1"/>
</dbReference>
<comment type="function">
    <text evidence="5 7">Serine protease. Has a substrate preference for the hydrophobic residues Phe and Ala and the basic residue Asp in the P1 position, and for Asp, Leu or Ala in the P1' position (PubMed:12413398). Essential for mucilage release from seed coats. Triggers the accumulation and/or activation of cell wall modifying enzymes necessary either for the loosening of the outer primary cell wall, or to facilitate swelling of the mucilage (PubMed:18266922).</text>
</comment>
<comment type="activity regulation">
    <text evidence="5">Activated by calcium. Inhibited by the serine protease inhibitors 4-(2-aminoethyl)benzenesulphonyl fluoride (AEBSF), PMSF, di-isopropyl phosphofluoridate (DFP) and soybean trypsin inhibitor (SBTI). Not inhibited by benzamidine or iodoacetamide. Leupeptin and pepstatin A have a minor inhibitory action.</text>
</comment>
<comment type="biophysicochemical properties">
    <phDependence>
        <text evidence="5">Optimum pH is 5.0.</text>
    </phDependence>
    <temperatureDependence>
        <text evidence="5">Optimum temperature is 80 degrees Celsius. Thermostable.</text>
    </temperatureDependence>
</comment>
<comment type="subcellular location">
    <subcellularLocation>
        <location evidence="5 9">Secreted</location>
        <location evidence="5 9">Cell wall</location>
    </subcellularLocation>
    <text>Intracellular spaces and cell wall.</text>
</comment>
<comment type="tissue specificity">
    <text evidence="4 5 7 8">Expressed in immature siliques and at lower levels in stems and flowers (PubMed:11055401, PubMed:12413398, PubMed:7647567). Widely expressed at low levels (PubMed:18266922).</text>
</comment>
<comment type="developmental stage">
    <text evidence="7 8">Highest levels of expression detected during silique development (PubMed:7647567). Hihghly expressed in the seed coat during seed development (PubMed:18266922).</text>
</comment>
<comment type="induction">
    <text evidence="6">By methyl jasmonate.</text>
</comment>
<comment type="mass spectrometry" mass="76102.8" method="MALDI" evidence="5"/>
<comment type="disruption phenotype">
    <text evidence="7">No visible phenotype under normal growth conditions, but mutant seeds are defective in mucilage extrusion.</text>
</comment>
<comment type="similarity">
    <text evidence="13">Belongs to the peptidase S8 family.</text>
</comment>
<organism>
    <name type="scientific">Arabidopsis thaliana</name>
    <name type="common">Mouse-ear cress</name>
    <dbReference type="NCBI Taxonomy" id="3702"/>
    <lineage>
        <taxon>Eukaryota</taxon>
        <taxon>Viridiplantae</taxon>
        <taxon>Streptophyta</taxon>
        <taxon>Embryophyta</taxon>
        <taxon>Tracheophyta</taxon>
        <taxon>Spermatophyta</taxon>
        <taxon>Magnoliopsida</taxon>
        <taxon>eudicotyledons</taxon>
        <taxon>Gunneridae</taxon>
        <taxon>Pentapetalae</taxon>
        <taxon>rosids</taxon>
        <taxon>malvids</taxon>
        <taxon>Brassicales</taxon>
        <taxon>Brassicaceae</taxon>
        <taxon>Camelineae</taxon>
        <taxon>Arabidopsis</taxon>
    </lineage>
</organism>
<proteinExistence type="evidence at protein level"/>
<sequence length="757" mass="79415">MSSSFLSSTAFFLLLCLGFCHVSSSSSDQGTYIVHMAKSQMPSSFDLHSNWYDSSLRSISDSAELLYTYENAIHGFSTRLTQEEADSLMTQPGVISVLPEHRYELHTTRTPLFLGLDEHTADLFPEAGSYSDVVVGVLDTGVWPESKSYSDEGFGPIPSSWKGGCEAGTNFTASLCNRKLIGARFFARGYESTMGPIDESKESRSPRDDDGHGTHTSSTAAGSVVEGASLLGYASGTARGMAPRARVAVYKVCWLGGCFSSDILAAIDKAIADNVNVLSMSLGGGMSDYYRDGVAIGAFAAMERGILVSCSAGNAGPSSSSLSNVAPWITTVGAGTLDRDFPALAILGNGKNFTGVSLFKGEALPDKLLPFIYAGNASNATNGNLCMTGTLIPEKVKGKIVMCDRGINARVQKGDVVKAAGGVGMILANTAANGEELVADAHLLPATTVGEKAGDIIRHYVTTDPNPTASISILGTVVGVKPSPVVAAFSSRGPNSITPNILKPDLIAPGVNILAAWTGAAGPTGLASDSRRVEFNIISGTSMSCPHVSGLAALLKSVHPEWSPAAIRSALMTTAYKTYKDGKPLLDIATGKPSTPFDHGAGHVSPTTATNPGLIYDLTTEDYLGFLCALNYTSPQIRSVSRRNYTCDPSKSYSVADLNYPSFAVNVDGVGAYKYTRTVTSVGGAGTYSVKVTSETTGVKISVEPAVLNFKEANEKKSYTVTFTVDSSKPSGSNSFGSIEWSDGKHVVGSPVAISWT</sequence>
<gene>
    <name evidence="12" type="primary">SBT1.7</name>
    <name type="synonym">ARA12</name>
    <name evidence="10" type="synonym">ASP48</name>
    <name evidence="11" type="synonym">SLP1</name>
    <name type="ordered locus">At5g67360</name>
    <name type="ORF">K8K14.8</name>
</gene>
<reference key="1">
    <citation type="journal article" date="2000" name="Biosci. Biotechnol. Biochem.">
        <title>Molecular cloning and characterization of a cDNA and a gene for subtilisin-like serine proteases from rice (Oryza sativa L.) and Arabidopsis thaliana.</title>
        <authorList>
            <person name="Yamagata H."/>
            <person name="Uesugi M."/>
            <person name="Saka K."/>
            <person name="Iwasaki T."/>
            <person name="Aizono Y."/>
        </authorList>
    </citation>
    <scope>NUCLEOTIDE SEQUENCE [GENOMIC DNA]</scope>
    <scope>TISSUE SPECIFICITY</scope>
    <source>
        <strain>cv. Columbia</strain>
    </source>
</reference>
<reference key="2">
    <citation type="journal article" date="1997" name="DNA Res.">
        <title>Structural analysis of Arabidopsis thaliana chromosome 5. III. Sequence features of the regions of 1,191,918 bp covered by seventeen physically assigned P1 clones.</title>
        <authorList>
            <person name="Nakamura Y."/>
            <person name="Sato S."/>
            <person name="Kaneko T."/>
            <person name="Kotani H."/>
            <person name="Asamizu E."/>
            <person name="Miyajima N."/>
            <person name="Tabata S."/>
        </authorList>
    </citation>
    <scope>NUCLEOTIDE SEQUENCE [LARGE SCALE GENOMIC DNA]</scope>
    <source>
        <strain>cv. Columbia</strain>
    </source>
</reference>
<reference key="3">
    <citation type="journal article" date="2017" name="Plant J.">
        <title>Araport11: a complete reannotation of the Arabidopsis thaliana reference genome.</title>
        <authorList>
            <person name="Cheng C.Y."/>
            <person name="Krishnakumar V."/>
            <person name="Chan A.P."/>
            <person name="Thibaud-Nissen F."/>
            <person name="Schobel S."/>
            <person name="Town C.D."/>
        </authorList>
    </citation>
    <scope>GENOME REANNOTATION</scope>
    <source>
        <strain>cv. Columbia</strain>
    </source>
</reference>
<reference key="4">
    <citation type="journal article" date="2003" name="Science">
        <title>Empirical analysis of transcriptional activity in the Arabidopsis genome.</title>
        <authorList>
            <person name="Yamada K."/>
            <person name="Lim J."/>
            <person name="Dale J.M."/>
            <person name="Chen H."/>
            <person name="Shinn P."/>
            <person name="Palm C.J."/>
            <person name="Southwick A.M."/>
            <person name="Wu H.C."/>
            <person name="Kim C.J."/>
            <person name="Nguyen M."/>
            <person name="Pham P.K."/>
            <person name="Cheuk R.F."/>
            <person name="Karlin-Newmann G."/>
            <person name="Liu S.X."/>
            <person name="Lam B."/>
            <person name="Sakano H."/>
            <person name="Wu T."/>
            <person name="Yu G."/>
            <person name="Miranda M."/>
            <person name="Quach H.L."/>
            <person name="Tripp M."/>
            <person name="Chang C.H."/>
            <person name="Lee J.M."/>
            <person name="Toriumi M.J."/>
            <person name="Chan M.M."/>
            <person name="Tang C.C."/>
            <person name="Onodera C.S."/>
            <person name="Deng J.M."/>
            <person name="Akiyama K."/>
            <person name="Ansari Y."/>
            <person name="Arakawa T."/>
            <person name="Banh J."/>
            <person name="Banno F."/>
            <person name="Bowser L."/>
            <person name="Brooks S.Y."/>
            <person name="Carninci P."/>
            <person name="Chao Q."/>
            <person name="Choy N."/>
            <person name="Enju A."/>
            <person name="Goldsmith A.D."/>
            <person name="Gurjal M."/>
            <person name="Hansen N.F."/>
            <person name="Hayashizaki Y."/>
            <person name="Johnson-Hopson C."/>
            <person name="Hsuan V.W."/>
            <person name="Iida K."/>
            <person name="Karnes M."/>
            <person name="Khan S."/>
            <person name="Koesema E."/>
            <person name="Ishida J."/>
            <person name="Jiang P.X."/>
            <person name="Jones T."/>
            <person name="Kawai J."/>
            <person name="Kamiya A."/>
            <person name="Meyers C."/>
            <person name="Nakajima M."/>
            <person name="Narusaka M."/>
            <person name="Seki M."/>
            <person name="Sakurai T."/>
            <person name="Satou M."/>
            <person name="Tamse R."/>
            <person name="Vaysberg M."/>
            <person name="Wallender E.K."/>
            <person name="Wong C."/>
            <person name="Yamamura Y."/>
            <person name="Yuan S."/>
            <person name="Shinozaki K."/>
            <person name="Davis R.W."/>
            <person name="Theologis A."/>
            <person name="Ecker J.R."/>
        </authorList>
    </citation>
    <scope>NUCLEOTIDE SEQUENCE [LARGE SCALE MRNA]</scope>
    <source>
        <strain>cv. Columbia</strain>
    </source>
</reference>
<reference key="5">
    <citation type="journal article" date="1995" name="Plant Cell">
        <title>A nodule-specific gene encoding a subtilisin-like protease is expressed in early stages of actinorhizal nodule development.</title>
        <authorList>
            <person name="Ribeiro A."/>
            <person name="Akkermans A.D.L."/>
            <person name="van Kammen A."/>
            <person name="Bisseling T."/>
            <person name="Pawlowski K."/>
        </authorList>
    </citation>
    <scope>NUCLEOTIDE SEQUENCE [MRNA] OF 10-757</scope>
    <scope>TISSUE SPECIFICITY</scope>
    <scope>DEVELOPMENTAL STAGE</scope>
    <source>
        <strain>cv. Columbia</strain>
    </source>
</reference>
<reference key="6">
    <citation type="journal article" date="1997" name="J. Biol. Chem.">
        <title>Differential extraction and protein sequencing reveals major differences in patterns of primary cell wall proteins from plants.</title>
        <authorList>
            <person name="Robertson D."/>
            <person name="Mitchell G.P."/>
            <person name="Gilroy J.S."/>
            <person name="Gerrish C."/>
            <person name="Bolwell G.P."/>
            <person name="Slabas A.R."/>
        </authorList>
    </citation>
    <scope>PROTEIN SEQUENCE OF 107-126</scope>
    <scope>SUBCELLULAR LOCATION</scope>
    <source>
        <strain>cv. Landsberg erecta</strain>
    </source>
</reference>
<reference key="7">
    <citation type="journal article" date="2003" name="Biochem. J.">
        <title>Ara12 subtilisin-like protease from Arabidopsis thaliana: purification, substrate specificity and tissue localization.</title>
        <authorList>
            <person name="Hamilton J.M.U."/>
            <person name="Simpson D.J."/>
            <person name="Hyman S.C."/>
            <person name="Ndimba B.K."/>
            <person name="Slabas A.R."/>
        </authorList>
    </citation>
    <scope>PROTEIN SEQUENCE OF 107-116</scope>
    <scope>FUNCTION</scope>
    <scope>ACTIVITY REGULATION</scope>
    <scope>BIOPHYSICOCHEMICAL PROPERTIES</scope>
    <scope>SUBCELLULAR LOCATION</scope>
    <scope>TISSUE SPECIFICITY</scope>
    <scope>MASS SPECTROMETRY</scope>
</reference>
<reference key="8">
    <citation type="journal article" date="2003" name="Physiol. Plantarum">
        <title>Expression of subtilisin-like serine proteases in Arabidopsis thaliana is cell-specific and responds to jasmonic acid and heavy metals with developmental differences.</title>
        <authorList>
            <person name="Golldack D."/>
            <person name="Vera P."/>
            <person name="Dietz K.J."/>
        </authorList>
    </citation>
    <scope>INDUCTION BY METHYL JASMONATE</scope>
</reference>
<reference key="9">
    <citation type="journal article" date="2005" name="PLoS Comput. Biol.">
        <title>Inferring hypotheses on functional relationships of genes: Analysis of the Arabidopsis thaliana subtilase gene family.</title>
        <authorList>
            <person name="Rautengarten C."/>
            <person name="Steinhauser D."/>
            <person name="Bussis D."/>
            <person name="Stintzi A."/>
            <person name="Schaller A."/>
            <person name="Kopka J."/>
            <person name="Altmann T."/>
        </authorList>
    </citation>
    <scope>GENE FAMILY</scope>
    <scope>NOMENCLATURE</scope>
</reference>
<reference key="10">
    <citation type="journal article" date="2008" name="Plant J.">
        <title>A subtilisin-like serine protease essential for mucilage release from Arabidopsis seed coats.</title>
        <authorList>
            <person name="Rautengarten C."/>
            <person name="Usadel B."/>
            <person name="Neumetzler L."/>
            <person name="Hartmann J."/>
            <person name="Bussis D."/>
            <person name="Altmann T."/>
        </authorList>
    </citation>
    <scope>FUNCTION</scope>
    <scope>TISSUE SPECIFICITY</scope>
    <scope>DEVELOPMENTAL STAGE</scope>
    <scope>DISRUPTION PHENOTYPE</scope>
</reference>
<evidence type="ECO:0000255" key="1"/>
<evidence type="ECO:0000255" key="2">
    <source>
        <dbReference type="PROSITE-ProRule" id="PRU01240"/>
    </source>
</evidence>
<evidence type="ECO:0000256" key="3">
    <source>
        <dbReference type="SAM" id="MobiDB-lite"/>
    </source>
</evidence>
<evidence type="ECO:0000269" key="4">
    <source>
    </source>
</evidence>
<evidence type="ECO:0000269" key="5">
    <source>
    </source>
</evidence>
<evidence type="ECO:0000269" key="6">
    <source>
    </source>
</evidence>
<evidence type="ECO:0000269" key="7">
    <source>
    </source>
</evidence>
<evidence type="ECO:0000269" key="8">
    <source>
    </source>
</evidence>
<evidence type="ECO:0000269" key="9">
    <source>
    </source>
</evidence>
<evidence type="ECO:0000303" key="10">
    <source>
    </source>
</evidence>
<evidence type="ECO:0000303" key="11">
    <source>
    </source>
</evidence>
<evidence type="ECO:0000303" key="12">
    <source>
    </source>
</evidence>
<evidence type="ECO:0000305" key="13"/>